<feature type="chain" id="PRO_1000092418" description="Elongation factor 4">
    <location>
        <begin position="1"/>
        <end position="597"/>
    </location>
</feature>
<feature type="domain" description="tr-type G">
    <location>
        <begin position="4"/>
        <end position="181"/>
    </location>
</feature>
<feature type="binding site" evidence="1">
    <location>
        <begin position="16"/>
        <end position="21"/>
    </location>
    <ligand>
        <name>GTP</name>
        <dbReference type="ChEBI" id="CHEBI:37565"/>
    </ligand>
</feature>
<feature type="binding site" evidence="1">
    <location>
        <begin position="128"/>
        <end position="131"/>
    </location>
    <ligand>
        <name>GTP</name>
        <dbReference type="ChEBI" id="CHEBI:37565"/>
    </ligand>
</feature>
<comment type="function">
    <text evidence="1">Required for accurate and efficient protein synthesis under certain stress conditions. May act as a fidelity factor of the translation reaction, by catalyzing a one-codon backward translocation of tRNAs on improperly translocated ribosomes. Back-translocation proceeds from a post-translocation (POST) complex to a pre-translocation (PRE) complex, thus giving elongation factor G a second chance to translocate the tRNAs correctly. Binds to ribosomes in a GTP-dependent manner.</text>
</comment>
<comment type="catalytic activity">
    <reaction evidence="1">
        <text>GTP + H2O = GDP + phosphate + H(+)</text>
        <dbReference type="Rhea" id="RHEA:19669"/>
        <dbReference type="ChEBI" id="CHEBI:15377"/>
        <dbReference type="ChEBI" id="CHEBI:15378"/>
        <dbReference type="ChEBI" id="CHEBI:37565"/>
        <dbReference type="ChEBI" id="CHEBI:43474"/>
        <dbReference type="ChEBI" id="CHEBI:58189"/>
        <dbReference type="EC" id="3.6.5.n1"/>
    </reaction>
</comment>
<comment type="subcellular location">
    <subcellularLocation>
        <location evidence="1">Cell membrane</location>
        <topology evidence="1">Peripheral membrane protein</topology>
        <orientation evidence="1">Cytoplasmic side</orientation>
    </subcellularLocation>
</comment>
<comment type="similarity">
    <text evidence="1">Belongs to the TRAFAC class translation factor GTPase superfamily. Classic translation factor GTPase family. LepA subfamily.</text>
</comment>
<protein>
    <recommendedName>
        <fullName evidence="1">Elongation factor 4</fullName>
        <shortName evidence="1">EF-4</shortName>
        <ecNumber evidence="1">3.6.5.n1</ecNumber>
    </recommendedName>
    <alternativeName>
        <fullName evidence="1">Ribosomal back-translocase LepA</fullName>
    </alternativeName>
</protein>
<gene>
    <name evidence="1" type="primary">lepA</name>
    <name type="ordered locus">MAG4810</name>
</gene>
<organism>
    <name type="scientific">Mycoplasmopsis agalactiae (strain NCTC 10123 / CIP 59.7 / PG2)</name>
    <name type="common">Mycoplasma agalactiae</name>
    <dbReference type="NCBI Taxonomy" id="347257"/>
    <lineage>
        <taxon>Bacteria</taxon>
        <taxon>Bacillati</taxon>
        <taxon>Mycoplasmatota</taxon>
        <taxon>Mycoplasmoidales</taxon>
        <taxon>Metamycoplasmataceae</taxon>
        <taxon>Mycoplasmopsis</taxon>
    </lineage>
</organism>
<proteinExistence type="inferred from homology"/>
<dbReference type="EC" id="3.6.5.n1" evidence="1"/>
<dbReference type="EMBL" id="CU179680">
    <property type="protein sequence ID" value="CAL59179.1"/>
    <property type="molecule type" value="Genomic_DNA"/>
</dbReference>
<dbReference type="RefSeq" id="WP_011949648.1">
    <property type="nucleotide sequence ID" value="NC_009497.1"/>
</dbReference>
<dbReference type="SMR" id="A5IYS0"/>
<dbReference type="STRING" id="347257.MAG4810"/>
<dbReference type="GeneID" id="93358223"/>
<dbReference type="KEGG" id="maa:MAG4810"/>
<dbReference type="HOGENOM" id="CLU_009995_3_3_14"/>
<dbReference type="Proteomes" id="UP000007065">
    <property type="component" value="Chromosome"/>
</dbReference>
<dbReference type="GO" id="GO:0005886">
    <property type="term" value="C:plasma membrane"/>
    <property type="evidence" value="ECO:0007669"/>
    <property type="project" value="UniProtKB-SubCell"/>
</dbReference>
<dbReference type="GO" id="GO:0005525">
    <property type="term" value="F:GTP binding"/>
    <property type="evidence" value="ECO:0007669"/>
    <property type="project" value="UniProtKB-UniRule"/>
</dbReference>
<dbReference type="GO" id="GO:0003924">
    <property type="term" value="F:GTPase activity"/>
    <property type="evidence" value="ECO:0007669"/>
    <property type="project" value="UniProtKB-UniRule"/>
</dbReference>
<dbReference type="GO" id="GO:0043022">
    <property type="term" value="F:ribosome binding"/>
    <property type="evidence" value="ECO:0007669"/>
    <property type="project" value="UniProtKB-UniRule"/>
</dbReference>
<dbReference type="GO" id="GO:0003746">
    <property type="term" value="F:translation elongation factor activity"/>
    <property type="evidence" value="ECO:0007669"/>
    <property type="project" value="UniProtKB-UniRule"/>
</dbReference>
<dbReference type="GO" id="GO:0045727">
    <property type="term" value="P:positive regulation of translation"/>
    <property type="evidence" value="ECO:0007669"/>
    <property type="project" value="UniProtKB-UniRule"/>
</dbReference>
<dbReference type="CDD" id="cd03699">
    <property type="entry name" value="EF4_II"/>
    <property type="match status" value="1"/>
</dbReference>
<dbReference type="CDD" id="cd16260">
    <property type="entry name" value="EF4_III"/>
    <property type="match status" value="1"/>
</dbReference>
<dbReference type="CDD" id="cd01890">
    <property type="entry name" value="LepA"/>
    <property type="match status" value="1"/>
</dbReference>
<dbReference type="CDD" id="cd03709">
    <property type="entry name" value="lepA_C"/>
    <property type="match status" value="1"/>
</dbReference>
<dbReference type="FunFam" id="3.40.50.300:FF:000078">
    <property type="entry name" value="Elongation factor 4"/>
    <property type="match status" value="1"/>
</dbReference>
<dbReference type="FunFam" id="2.40.30.10:FF:000015">
    <property type="entry name" value="Translation factor GUF1, mitochondrial"/>
    <property type="match status" value="1"/>
</dbReference>
<dbReference type="FunFam" id="3.30.70.240:FF:000007">
    <property type="entry name" value="Translation factor GUF1, mitochondrial"/>
    <property type="match status" value="1"/>
</dbReference>
<dbReference type="FunFam" id="3.30.70.2570:FF:000001">
    <property type="entry name" value="Translation factor GUF1, mitochondrial"/>
    <property type="match status" value="1"/>
</dbReference>
<dbReference type="FunFam" id="3.30.70.870:FF:000004">
    <property type="entry name" value="Translation factor GUF1, mitochondrial"/>
    <property type="match status" value="1"/>
</dbReference>
<dbReference type="Gene3D" id="3.30.70.240">
    <property type="match status" value="1"/>
</dbReference>
<dbReference type="Gene3D" id="3.30.70.2570">
    <property type="entry name" value="Elongation factor 4, C-terminal domain"/>
    <property type="match status" value="1"/>
</dbReference>
<dbReference type="Gene3D" id="3.30.70.870">
    <property type="entry name" value="Elongation Factor G (Translational Gtpase), domain 3"/>
    <property type="match status" value="1"/>
</dbReference>
<dbReference type="Gene3D" id="3.40.50.300">
    <property type="entry name" value="P-loop containing nucleotide triphosphate hydrolases"/>
    <property type="match status" value="1"/>
</dbReference>
<dbReference type="Gene3D" id="2.40.30.10">
    <property type="entry name" value="Translation factors"/>
    <property type="match status" value="1"/>
</dbReference>
<dbReference type="HAMAP" id="MF_00071">
    <property type="entry name" value="LepA"/>
    <property type="match status" value="1"/>
</dbReference>
<dbReference type="InterPro" id="IPR006297">
    <property type="entry name" value="EF-4"/>
</dbReference>
<dbReference type="InterPro" id="IPR035647">
    <property type="entry name" value="EFG_III/V"/>
</dbReference>
<dbReference type="InterPro" id="IPR000640">
    <property type="entry name" value="EFG_V-like"/>
</dbReference>
<dbReference type="InterPro" id="IPR004161">
    <property type="entry name" value="EFTu-like_2"/>
</dbReference>
<dbReference type="InterPro" id="IPR031157">
    <property type="entry name" value="G_TR_CS"/>
</dbReference>
<dbReference type="InterPro" id="IPR038363">
    <property type="entry name" value="LepA_C_sf"/>
</dbReference>
<dbReference type="InterPro" id="IPR013842">
    <property type="entry name" value="LepA_CTD"/>
</dbReference>
<dbReference type="InterPro" id="IPR035654">
    <property type="entry name" value="LepA_IV"/>
</dbReference>
<dbReference type="InterPro" id="IPR027417">
    <property type="entry name" value="P-loop_NTPase"/>
</dbReference>
<dbReference type="InterPro" id="IPR005225">
    <property type="entry name" value="Small_GTP-bd"/>
</dbReference>
<dbReference type="InterPro" id="IPR000795">
    <property type="entry name" value="T_Tr_GTP-bd_dom"/>
</dbReference>
<dbReference type="InterPro" id="IPR009000">
    <property type="entry name" value="Transl_B-barrel_sf"/>
</dbReference>
<dbReference type="NCBIfam" id="TIGR01393">
    <property type="entry name" value="lepA"/>
    <property type="match status" value="1"/>
</dbReference>
<dbReference type="NCBIfam" id="TIGR00231">
    <property type="entry name" value="small_GTP"/>
    <property type="match status" value="1"/>
</dbReference>
<dbReference type="PANTHER" id="PTHR43512:SF4">
    <property type="entry name" value="TRANSLATION FACTOR GUF1 HOMOLOG, CHLOROPLASTIC"/>
    <property type="match status" value="1"/>
</dbReference>
<dbReference type="PANTHER" id="PTHR43512">
    <property type="entry name" value="TRANSLATION FACTOR GUF1-RELATED"/>
    <property type="match status" value="1"/>
</dbReference>
<dbReference type="Pfam" id="PF00679">
    <property type="entry name" value="EFG_C"/>
    <property type="match status" value="1"/>
</dbReference>
<dbReference type="Pfam" id="PF00009">
    <property type="entry name" value="GTP_EFTU"/>
    <property type="match status" value="1"/>
</dbReference>
<dbReference type="Pfam" id="PF03144">
    <property type="entry name" value="GTP_EFTU_D2"/>
    <property type="match status" value="1"/>
</dbReference>
<dbReference type="Pfam" id="PF06421">
    <property type="entry name" value="LepA_C"/>
    <property type="match status" value="1"/>
</dbReference>
<dbReference type="PRINTS" id="PR00315">
    <property type="entry name" value="ELONGATNFCT"/>
</dbReference>
<dbReference type="SUPFAM" id="SSF54980">
    <property type="entry name" value="EF-G C-terminal domain-like"/>
    <property type="match status" value="2"/>
</dbReference>
<dbReference type="SUPFAM" id="SSF52540">
    <property type="entry name" value="P-loop containing nucleoside triphosphate hydrolases"/>
    <property type="match status" value="1"/>
</dbReference>
<dbReference type="SUPFAM" id="SSF50447">
    <property type="entry name" value="Translation proteins"/>
    <property type="match status" value="1"/>
</dbReference>
<dbReference type="PROSITE" id="PS00301">
    <property type="entry name" value="G_TR_1"/>
    <property type="match status" value="1"/>
</dbReference>
<dbReference type="PROSITE" id="PS51722">
    <property type="entry name" value="G_TR_2"/>
    <property type="match status" value="1"/>
</dbReference>
<reference key="1">
    <citation type="journal article" date="2007" name="PLoS Genet.">
        <title>Being pathogenic, plastic, and sexual while living with a nearly minimal bacterial genome.</title>
        <authorList>
            <person name="Sirand-Pugnet P."/>
            <person name="Lartigue C."/>
            <person name="Marenda M."/>
            <person name="Jacob D."/>
            <person name="Barre A."/>
            <person name="Barbe V."/>
            <person name="Schenowitz C."/>
            <person name="Mangenot S."/>
            <person name="Couloux A."/>
            <person name="Segurens B."/>
            <person name="de Daruvar A."/>
            <person name="Blanchard A."/>
            <person name="Citti C."/>
        </authorList>
    </citation>
    <scope>NUCLEOTIDE SEQUENCE [LARGE SCALE GENOMIC DNA]</scope>
    <source>
        <strain>NCTC 10123 / CIP 59.7 / PG2</strain>
    </source>
</reference>
<accession>A5IYS0</accession>
<evidence type="ECO:0000255" key="1">
    <source>
        <dbReference type="HAMAP-Rule" id="MF_00071"/>
    </source>
</evidence>
<keyword id="KW-1003">Cell membrane</keyword>
<keyword id="KW-0342">GTP-binding</keyword>
<keyword id="KW-0378">Hydrolase</keyword>
<keyword id="KW-0472">Membrane</keyword>
<keyword id="KW-0547">Nucleotide-binding</keyword>
<keyword id="KW-0648">Protein biosynthesis</keyword>
<keyword id="KW-1185">Reference proteome</keyword>
<name>LEPA_MYCAP</name>
<sequence length="597" mass="67504">MDKSKIRNFSIIAHIDHGKSTLADRILELTNTVAARDLEEQFLDQMDLERERGITIKLNAVQIKYKDYTFHLIDTPGHVDFTYEVSRSLAASEGALLLVDATQGIEAQTLANVYLALENNLEIIPIINKIDLPSANVEKTKEEIENVIGIPADNAVCVSAKTGLNCEKVLDAIVDYVPAPKDADDNKPLKALIFDSYFDEYRGVIMLIRVFQGKLKVGDDFKFMSNNANYHVIELGVRNPKETKKEYLEAGEVGYVAATIRDAKEVHVGDTITLVENPALEPLPGYKRKKPVLFTGFYPIDTRDYAELKKSLDKISLSDSSLTWEQETSKALGFGFRVGFLGMLHMDVIQERLSREYKVGIIATSPSVEYKVVKTNGTFEMISNPSLMPDRTYIDHIEEPYIEATIILPNEYIGNIMDLCQNKRGIYKSLDYIDDSRSRLIYEMPLGEIVFDFFDKMKSLSKGYASFEYDLIGYKTSDLVKVDILLNGDKIDAFSIITHKDSAYEKSRDLTKRLKDAIPRQNFEVPVQATIGGKIIARETIKAFRKDVTHKLHASDISRYKKLLEKQKAGKKKMKMLGSVEVPQEAFLDILKTNVDK</sequence>